<name>SYGB_SERP5</name>
<feature type="chain" id="PRO_1000059063" description="Glycine--tRNA ligase beta subunit">
    <location>
        <begin position="1"/>
        <end position="689"/>
    </location>
</feature>
<protein>
    <recommendedName>
        <fullName evidence="1">Glycine--tRNA ligase beta subunit</fullName>
        <ecNumber evidence="1">6.1.1.14</ecNumber>
    </recommendedName>
    <alternativeName>
        <fullName evidence="1">Glycyl-tRNA synthetase beta subunit</fullName>
        <shortName evidence="1">GlyRS</shortName>
    </alternativeName>
</protein>
<dbReference type="EC" id="6.1.1.14" evidence="1"/>
<dbReference type="EMBL" id="CP000826">
    <property type="protein sequence ID" value="ABV39180.1"/>
    <property type="molecule type" value="Genomic_DNA"/>
</dbReference>
<dbReference type="SMR" id="A8G7U0"/>
<dbReference type="STRING" id="399741.Spro_0070"/>
<dbReference type="KEGG" id="spe:Spro_0070"/>
<dbReference type="eggNOG" id="COG0751">
    <property type="taxonomic scope" value="Bacteria"/>
</dbReference>
<dbReference type="HOGENOM" id="CLU_007220_2_2_6"/>
<dbReference type="OrthoDB" id="9775440at2"/>
<dbReference type="GO" id="GO:0005829">
    <property type="term" value="C:cytosol"/>
    <property type="evidence" value="ECO:0007669"/>
    <property type="project" value="TreeGrafter"/>
</dbReference>
<dbReference type="GO" id="GO:0004814">
    <property type="term" value="F:arginine-tRNA ligase activity"/>
    <property type="evidence" value="ECO:0007669"/>
    <property type="project" value="InterPro"/>
</dbReference>
<dbReference type="GO" id="GO:0005524">
    <property type="term" value="F:ATP binding"/>
    <property type="evidence" value="ECO:0007669"/>
    <property type="project" value="UniProtKB-UniRule"/>
</dbReference>
<dbReference type="GO" id="GO:0004820">
    <property type="term" value="F:glycine-tRNA ligase activity"/>
    <property type="evidence" value="ECO:0007669"/>
    <property type="project" value="UniProtKB-UniRule"/>
</dbReference>
<dbReference type="GO" id="GO:0006420">
    <property type="term" value="P:arginyl-tRNA aminoacylation"/>
    <property type="evidence" value="ECO:0007669"/>
    <property type="project" value="InterPro"/>
</dbReference>
<dbReference type="GO" id="GO:0006426">
    <property type="term" value="P:glycyl-tRNA aminoacylation"/>
    <property type="evidence" value="ECO:0007669"/>
    <property type="project" value="UniProtKB-UniRule"/>
</dbReference>
<dbReference type="HAMAP" id="MF_00255">
    <property type="entry name" value="Gly_tRNA_synth_beta"/>
    <property type="match status" value="1"/>
</dbReference>
<dbReference type="InterPro" id="IPR008909">
    <property type="entry name" value="DALR_anticod-bd"/>
</dbReference>
<dbReference type="InterPro" id="IPR015944">
    <property type="entry name" value="Gly-tRNA-synth_bsu"/>
</dbReference>
<dbReference type="InterPro" id="IPR006194">
    <property type="entry name" value="Gly-tRNA-synth_heterodimer"/>
</dbReference>
<dbReference type="NCBIfam" id="TIGR00211">
    <property type="entry name" value="glyS"/>
    <property type="match status" value="1"/>
</dbReference>
<dbReference type="PANTHER" id="PTHR30075:SF2">
    <property type="entry name" value="GLYCINE--TRNA LIGASE, CHLOROPLASTIC_MITOCHONDRIAL 2"/>
    <property type="match status" value="1"/>
</dbReference>
<dbReference type="PANTHER" id="PTHR30075">
    <property type="entry name" value="GLYCYL-TRNA SYNTHETASE"/>
    <property type="match status" value="1"/>
</dbReference>
<dbReference type="Pfam" id="PF05746">
    <property type="entry name" value="DALR_1"/>
    <property type="match status" value="1"/>
</dbReference>
<dbReference type="Pfam" id="PF02092">
    <property type="entry name" value="tRNA_synt_2f"/>
    <property type="match status" value="1"/>
</dbReference>
<dbReference type="PRINTS" id="PR01045">
    <property type="entry name" value="TRNASYNTHGB"/>
</dbReference>
<dbReference type="SUPFAM" id="SSF109604">
    <property type="entry name" value="HD-domain/PDEase-like"/>
    <property type="match status" value="1"/>
</dbReference>
<dbReference type="PROSITE" id="PS50861">
    <property type="entry name" value="AA_TRNA_LIGASE_II_GLYAB"/>
    <property type="match status" value="1"/>
</dbReference>
<comment type="catalytic activity">
    <reaction evidence="1">
        <text>tRNA(Gly) + glycine + ATP = glycyl-tRNA(Gly) + AMP + diphosphate</text>
        <dbReference type="Rhea" id="RHEA:16013"/>
        <dbReference type="Rhea" id="RHEA-COMP:9664"/>
        <dbReference type="Rhea" id="RHEA-COMP:9683"/>
        <dbReference type="ChEBI" id="CHEBI:30616"/>
        <dbReference type="ChEBI" id="CHEBI:33019"/>
        <dbReference type="ChEBI" id="CHEBI:57305"/>
        <dbReference type="ChEBI" id="CHEBI:78442"/>
        <dbReference type="ChEBI" id="CHEBI:78522"/>
        <dbReference type="ChEBI" id="CHEBI:456215"/>
        <dbReference type="EC" id="6.1.1.14"/>
    </reaction>
</comment>
<comment type="subunit">
    <text evidence="1">Tetramer of two alpha and two beta subunits.</text>
</comment>
<comment type="subcellular location">
    <subcellularLocation>
        <location evidence="1">Cytoplasm</location>
    </subcellularLocation>
</comment>
<comment type="similarity">
    <text evidence="1">Belongs to the class-II aminoacyl-tRNA synthetase family.</text>
</comment>
<evidence type="ECO:0000255" key="1">
    <source>
        <dbReference type="HAMAP-Rule" id="MF_00255"/>
    </source>
</evidence>
<proteinExistence type="inferred from homology"/>
<accession>A8G7U0</accession>
<keyword id="KW-0030">Aminoacyl-tRNA synthetase</keyword>
<keyword id="KW-0067">ATP-binding</keyword>
<keyword id="KW-0963">Cytoplasm</keyword>
<keyword id="KW-0436">Ligase</keyword>
<keyword id="KW-0547">Nucleotide-binding</keyword>
<keyword id="KW-0648">Protein biosynthesis</keyword>
<organism>
    <name type="scientific">Serratia proteamaculans (strain 568)</name>
    <dbReference type="NCBI Taxonomy" id="399741"/>
    <lineage>
        <taxon>Bacteria</taxon>
        <taxon>Pseudomonadati</taxon>
        <taxon>Pseudomonadota</taxon>
        <taxon>Gammaproteobacteria</taxon>
        <taxon>Enterobacterales</taxon>
        <taxon>Yersiniaceae</taxon>
        <taxon>Serratia</taxon>
    </lineage>
</organism>
<sequence>MTQQTFLVEIGTEELPPKALRSLAEAFAANFTAELDSANLEHGEVSWFAAPRRLALKVANLSAAQADREVEKRGPAIAQAFDAEGKPSKAAEGWARGCGITVDQAERLVTDKGEWLLYRAHVKGQSAQALLAGMVSNSLAKLPIPKLMRWGDSDVQFVRPVHTVTMLLGAELIPGTVLGIDSARTVRGHRFMGEAEFTIDNADQYPQILLERGKVIADYETRKAMIKRDAELAASTIGGKADLSESLLEEVASLVEWPVVLTAKFEEKFLAVPAEALVYTMKGDQKYFPVYDAAGKLLPNFIFVANIESKDPQQIISGNEKVVRPRLADAEFFFNTDRKKRLEDNLPRLETVLFQQQLGTLRDKTDRIQALAGWVAGQIGADVNHATRAGLLSKCDLMTNMVFEFTDTQGVMGMHYARHDGEAEDVAVALNEQYQPRFAGDALPESLVACSLAIADKMDTLAGIFGIGQHPKGDKDPFALRRAALGVLRIIVEKNLTLDLQTLTEEAVRLYGSKLTNAKVVDEVVEFMLGRFRAWYQEEGHAVDTIQAVLARRPTKPADFDARVKAVTHFRTLEAAAALAAANKRVSNILAKSTDTLNDRVHASVLKEAAEIQLATHLVVLRDKLEPYFAAGNYQDALVELADLREPVDAFFDNVMVMAEDEAVRVNRLTLLSKLRELFLQVADISVLQ</sequence>
<reference key="1">
    <citation type="submission" date="2007-09" db="EMBL/GenBank/DDBJ databases">
        <title>Complete sequence of chromosome of Serratia proteamaculans 568.</title>
        <authorList>
            <consortium name="US DOE Joint Genome Institute"/>
            <person name="Copeland A."/>
            <person name="Lucas S."/>
            <person name="Lapidus A."/>
            <person name="Barry K."/>
            <person name="Glavina del Rio T."/>
            <person name="Dalin E."/>
            <person name="Tice H."/>
            <person name="Pitluck S."/>
            <person name="Chain P."/>
            <person name="Malfatti S."/>
            <person name="Shin M."/>
            <person name="Vergez L."/>
            <person name="Schmutz J."/>
            <person name="Larimer F."/>
            <person name="Land M."/>
            <person name="Hauser L."/>
            <person name="Kyrpides N."/>
            <person name="Kim E."/>
            <person name="Taghavi S."/>
            <person name="Newman L."/>
            <person name="Vangronsveld J."/>
            <person name="van der Lelie D."/>
            <person name="Richardson P."/>
        </authorList>
    </citation>
    <scope>NUCLEOTIDE SEQUENCE [LARGE SCALE GENOMIC DNA]</scope>
    <source>
        <strain>568</strain>
    </source>
</reference>
<gene>
    <name evidence="1" type="primary">glyS</name>
    <name type="ordered locus">Spro_0070</name>
</gene>